<sequence>MTKITVFGMGSFGTALANVLAENGHDVLMWGKNQDAVDELNTCHTNKKYLKYAKLDVNIIATSDMTKAIQFADIYLMALPTKAMREVATQINDKLTSKKTFIHVAKGIENGTFKRVSEMIEDSISPEYNAGIGVLSGPSHAEEVVVKQPTTVAASSKDKSVSKLTQDLFMNDYLRVYTNDDLIGVELGGALKNIIAVASGIVAGIGYGDNAKAALMTRGLAEISRLGEKLGADPMTFLGLGGIGDLIVTCISTHSRNFTLGYKLGQGESMDQALSEMNMVVEGIYTTKSVYHLAKEKNVDMPITNALYRVLFENISVKECVKDLMERDKKSE</sequence>
<accession>A7X2I0</accession>
<reference key="1">
    <citation type="journal article" date="2008" name="Antimicrob. Agents Chemother.">
        <title>Mutated response regulator graR is responsible for phenotypic conversion of Staphylococcus aureus from heterogeneous vancomycin-intermediate resistance to vancomycin-intermediate resistance.</title>
        <authorList>
            <person name="Neoh H.-M."/>
            <person name="Cui L."/>
            <person name="Yuzawa H."/>
            <person name="Takeuchi F."/>
            <person name="Matsuo M."/>
            <person name="Hiramatsu K."/>
        </authorList>
    </citation>
    <scope>NUCLEOTIDE SEQUENCE [LARGE SCALE GENOMIC DNA]</scope>
    <source>
        <strain>Mu3 / ATCC 700698</strain>
    </source>
</reference>
<evidence type="ECO:0000255" key="1">
    <source>
        <dbReference type="HAMAP-Rule" id="MF_00394"/>
    </source>
</evidence>
<comment type="function">
    <text evidence="1">Catalyzes the reduction of the glycolytic intermediate dihydroxyacetone phosphate (DHAP) to sn-glycerol 3-phosphate (G3P), the key precursor for phospholipid synthesis.</text>
</comment>
<comment type="catalytic activity">
    <reaction evidence="1">
        <text>sn-glycerol 3-phosphate + NAD(+) = dihydroxyacetone phosphate + NADH + H(+)</text>
        <dbReference type="Rhea" id="RHEA:11092"/>
        <dbReference type="ChEBI" id="CHEBI:15378"/>
        <dbReference type="ChEBI" id="CHEBI:57540"/>
        <dbReference type="ChEBI" id="CHEBI:57597"/>
        <dbReference type="ChEBI" id="CHEBI:57642"/>
        <dbReference type="ChEBI" id="CHEBI:57945"/>
        <dbReference type="EC" id="1.1.1.94"/>
    </reaction>
    <physiologicalReaction direction="right-to-left" evidence="1">
        <dbReference type="Rhea" id="RHEA:11094"/>
    </physiologicalReaction>
</comment>
<comment type="catalytic activity">
    <reaction evidence="1">
        <text>sn-glycerol 3-phosphate + NADP(+) = dihydroxyacetone phosphate + NADPH + H(+)</text>
        <dbReference type="Rhea" id="RHEA:11096"/>
        <dbReference type="ChEBI" id="CHEBI:15378"/>
        <dbReference type="ChEBI" id="CHEBI:57597"/>
        <dbReference type="ChEBI" id="CHEBI:57642"/>
        <dbReference type="ChEBI" id="CHEBI:57783"/>
        <dbReference type="ChEBI" id="CHEBI:58349"/>
        <dbReference type="EC" id="1.1.1.94"/>
    </reaction>
    <physiologicalReaction direction="right-to-left" evidence="1">
        <dbReference type="Rhea" id="RHEA:11098"/>
    </physiologicalReaction>
</comment>
<comment type="pathway">
    <text evidence="1">Membrane lipid metabolism; glycerophospholipid metabolism.</text>
</comment>
<comment type="subcellular location">
    <subcellularLocation>
        <location evidence="1">Cytoplasm</location>
    </subcellularLocation>
</comment>
<comment type="similarity">
    <text evidence="1">Belongs to the NAD-dependent glycerol-3-phosphate dehydrogenase family.</text>
</comment>
<organism>
    <name type="scientific">Staphylococcus aureus (strain Mu3 / ATCC 700698)</name>
    <dbReference type="NCBI Taxonomy" id="418127"/>
    <lineage>
        <taxon>Bacteria</taxon>
        <taxon>Bacillati</taxon>
        <taxon>Bacillota</taxon>
        <taxon>Bacilli</taxon>
        <taxon>Bacillales</taxon>
        <taxon>Staphylococcaceae</taxon>
        <taxon>Staphylococcus</taxon>
    </lineage>
</organism>
<feature type="chain" id="PRO_1000049558" description="Glycerol-3-phosphate dehydrogenase [NAD(P)+]">
    <location>
        <begin position="1"/>
        <end position="332"/>
    </location>
</feature>
<feature type="active site" description="Proton acceptor" evidence="1">
    <location>
        <position position="192"/>
    </location>
</feature>
<feature type="binding site" evidence="1">
    <location>
        <position position="11"/>
    </location>
    <ligand>
        <name>NADPH</name>
        <dbReference type="ChEBI" id="CHEBI:57783"/>
    </ligand>
</feature>
<feature type="binding site" evidence="1">
    <location>
        <position position="12"/>
    </location>
    <ligand>
        <name>NADPH</name>
        <dbReference type="ChEBI" id="CHEBI:57783"/>
    </ligand>
</feature>
<feature type="binding site" evidence="1">
    <location>
        <position position="32"/>
    </location>
    <ligand>
        <name>NADPH</name>
        <dbReference type="ChEBI" id="CHEBI:57783"/>
    </ligand>
</feature>
<feature type="binding site" evidence="1">
    <location>
        <position position="106"/>
    </location>
    <ligand>
        <name>NADPH</name>
        <dbReference type="ChEBI" id="CHEBI:57783"/>
    </ligand>
</feature>
<feature type="binding site" evidence="1">
    <location>
        <position position="106"/>
    </location>
    <ligand>
        <name>sn-glycerol 3-phosphate</name>
        <dbReference type="ChEBI" id="CHEBI:57597"/>
    </ligand>
</feature>
<feature type="binding site" evidence="1">
    <location>
        <position position="137"/>
    </location>
    <ligand>
        <name>sn-glycerol 3-phosphate</name>
        <dbReference type="ChEBI" id="CHEBI:57597"/>
    </ligand>
</feature>
<feature type="binding site" evidence="1">
    <location>
        <position position="139"/>
    </location>
    <ligand>
        <name>sn-glycerol 3-phosphate</name>
        <dbReference type="ChEBI" id="CHEBI:57597"/>
    </ligand>
</feature>
<feature type="binding site" evidence="1">
    <location>
        <position position="141"/>
    </location>
    <ligand>
        <name>NADPH</name>
        <dbReference type="ChEBI" id="CHEBI:57783"/>
    </ligand>
</feature>
<feature type="binding site" evidence="1">
    <location>
        <position position="192"/>
    </location>
    <ligand>
        <name>sn-glycerol 3-phosphate</name>
        <dbReference type="ChEBI" id="CHEBI:57597"/>
    </ligand>
</feature>
<feature type="binding site" evidence="1">
    <location>
        <position position="245"/>
    </location>
    <ligand>
        <name>sn-glycerol 3-phosphate</name>
        <dbReference type="ChEBI" id="CHEBI:57597"/>
    </ligand>
</feature>
<feature type="binding site" evidence="1">
    <location>
        <position position="255"/>
    </location>
    <ligand>
        <name>sn-glycerol 3-phosphate</name>
        <dbReference type="ChEBI" id="CHEBI:57597"/>
    </ligand>
</feature>
<feature type="binding site" evidence="1">
    <location>
        <position position="256"/>
    </location>
    <ligand>
        <name>NADPH</name>
        <dbReference type="ChEBI" id="CHEBI:57783"/>
    </ligand>
</feature>
<feature type="binding site" evidence="1">
    <location>
        <position position="256"/>
    </location>
    <ligand>
        <name>sn-glycerol 3-phosphate</name>
        <dbReference type="ChEBI" id="CHEBI:57597"/>
    </ligand>
</feature>
<feature type="binding site" evidence="1">
    <location>
        <position position="257"/>
    </location>
    <ligand>
        <name>sn-glycerol 3-phosphate</name>
        <dbReference type="ChEBI" id="CHEBI:57597"/>
    </ligand>
</feature>
<feature type="binding site" evidence="1">
    <location>
        <position position="280"/>
    </location>
    <ligand>
        <name>NADPH</name>
        <dbReference type="ChEBI" id="CHEBI:57783"/>
    </ligand>
</feature>
<feature type="binding site" evidence="1">
    <location>
        <position position="282"/>
    </location>
    <ligand>
        <name>NADPH</name>
        <dbReference type="ChEBI" id="CHEBI:57783"/>
    </ligand>
</feature>
<proteinExistence type="inferred from homology"/>
<keyword id="KW-0963">Cytoplasm</keyword>
<keyword id="KW-0444">Lipid biosynthesis</keyword>
<keyword id="KW-0443">Lipid metabolism</keyword>
<keyword id="KW-0520">NAD</keyword>
<keyword id="KW-0521">NADP</keyword>
<keyword id="KW-0547">Nucleotide-binding</keyword>
<keyword id="KW-0560">Oxidoreductase</keyword>
<keyword id="KW-0594">Phospholipid biosynthesis</keyword>
<keyword id="KW-1208">Phospholipid metabolism</keyword>
<gene>
    <name evidence="1" type="primary">gpsA</name>
    <name type="ordered locus">SAHV_1462</name>
</gene>
<protein>
    <recommendedName>
        <fullName evidence="1">Glycerol-3-phosphate dehydrogenase [NAD(P)+]</fullName>
        <ecNumber evidence="1">1.1.1.94</ecNumber>
    </recommendedName>
    <alternativeName>
        <fullName evidence="1">NAD(P)(+)-dependent glycerol-3-phosphate dehydrogenase</fullName>
    </alternativeName>
    <alternativeName>
        <fullName evidence="1">NAD(P)H-dependent dihydroxyacetone-phosphate reductase</fullName>
    </alternativeName>
</protein>
<dbReference type="EC" id="1.1.1.94" evidence="1"/>
<dbReference type="EMBL" id="AP009324">
    <property type="protein sequence ID" value="BAF78345.1"/>
    <property type="molecule type" value="Genomic_DNA"/>
</dbReference>
<dbReference type="RefSeq" id="WP_000161745.1">
    <property type="nucleotide sequence ID" value="NC_009782.1"/>
</dbReference>
<dbReference type="SMR" id="A7X2I0"/>
<dbReference type="KEGG" id="saw:SAHV_1462"/>
<dbReference type="HOGENOM" id="CLU_033449_0_2_9"/>
<dbReference type="UniPathway" id="UPA00940"/>
<dbReference type="GO" id="GO:0005829">
    <property type="term" value="C:cytosol"/>
    <property type="evidence" value="ECO:0007669"/>
    <property type="project" value="TreeGrafter"/>
</dbReference>
<dbReference type="GO" id="GO:0047952">
    <property type="term" value="F:glycerol-3-phosphate dehydrogenase [NAD(P)+] activity"/>
    <property type="evidence" value="ECO:0007669"/>
    <property type="project" value="UniProtKB-UniRule"/>
</dbReference>
<dbReference type="GO" id="GO:0051287">
    <property type="term" value="F:NAD binding"/>
    <property type="evidence" value="ECO:0007669"/>
    <property type="project" value="InterPro"/>
</dbReference>
<dbReference type="GO" id="GO:0005975">
    <property type="term" value="P:carbohydrate metabolic process"/>
    <property type="evidence" value="ECO:0007669"/>
    <property type="project" value="InterPro"/>
</dbReference>
<dbReference type="GO" id="GO:0046167">
    <property type="term" value="P:glycerol-3-phosphate biosynthetic process"/>
    <property type="evidence" value="ECO:0007669"/>
    <property type="project" value="UniProtKB-UniRule"/>
</dbReference>
<dbReference type="GO" id="GO:0046168">
    <property type="term" value="P:glycerol-3-phosphate catabolic process"/>
    <property type="evidence" value="ECO:0007669"/>
    <property type="project" value="InterPro"/>
</dbReference>
<dbReference type="GO" id="GO:0006650">
    <property type="term" value="P:glycerophospholipid metabolic process"/>
    <property type="evidence" value="ECO:0007669"/>
    <property type="project" value="UniProtKB-UniRule"/>
</dbReference>
<dbReference type="GO" id="GO:0008654">
    <property type="term" value="P:phospholipid biosynthetic process"/>
    <property type="evidence" value="ECO:0007669"/>
    <property type="project" value="UniProtKB-KW"/>
</dbReference>
<dbReference type="FunFam" id="1.10.1040.10:FF:000001">
    <property type="entry name" value="Glycerol-3-phosphate dehydrogenase [NAD(P)+]"/>
    <property type="match status" value="1"/>
</dbReference>
<dbReference type="FunFam" id="3.40.50.720:FF:000019">
    <property type="entry name" value="Glycerol-3-phosphate dehydrogenase [NAD(P)+]"/>
    <property type="match status" value="1"/>
</dbReference>
<dbReference type="Gene3D" id="1.10.1040.10">
    <property type="entry name" value="N-(1-d-carboxylethyl)-l-norvaline Dehydrogenase, domain 2"/>
    <property type="match status" value="1"/>
</dbReference>
<dbReference type="Gene3D" id="3.40.50.720">
    <property type="entry name" value="NAD(P)-binding Rossmann-like Domain"/>
    <property type="match status" value="1"/>
</dbReference>
<dbReference type="HAMAP" id="MF_00394">
    <property type="entry name" value="NAD_Glyc3P_dehydrog"/>
    <property type="match status" value="1"/>
</dbReference>
<dbReference type="InterPro" id="IPR008927">
    <property type="entry name" value="6-PGluconate_DH-like_C_sf"/>
</dbReference>
<dbReference type="InterPro" id="IPR013328">
    <property type="entry name" value="6PGD_dom2"/>
</dbReference>
<dbReference type="InterPro" id="IPR006168">
    <property type="entry name" value="G3P_DH_NAD-dep"/>
</dbReference>
<dbReference type="InterPro" id="IPR006109">
    <property type="entry name" value="G3P_DH_NAD-dep_C"/>
</dbReference>
<dbReference type="InterPro" id="IPR011128">
    <property type="entry name" value="G3P_DH_NAD-dep_N"/>
</dbReference>
<dbReference type="InterPro" id="IPR036291">
    <property type="entry name" value="NAD(P)-bd_dom_sf"/>
</dbReference>
<dbReference type="NCBIfam" id="NF000940">
    <property type="entry name" value="PRK00094.1-2"/>
    <property type="match status" value="1"/>
</dbReference>
<dbReference type="NCBIfam" id="NF000941">
    <property type="entry name" value="PRK00094.1-3"/>
    <property type="match status" value="1"/>
</dbReference>
<dbReference type="NCBIfam" id="NF000942">
    <property type="entry name" value="PRK00094.1-4"/>
    <property type="match status" value="1"/>
</dbReference>
<dbReference type="PANTHER" id="PTHR11728">
    <property type="entry name" value="GLYCEROL-3-PHOSPHATE DEHYDROGENASE"/>
    <property type="match status" value="1"/>
</dbReference>
<dbReference type="PANTHER" id="PTHR11728:SF1">
    <property type="entry name" value="GLYCEROL-3-PHOSPHATE DEHYDROGENASE [NAD(+)] 2, CHLOROPLASTIC"/>
    <property type="match status" value="1"/>
</dbReference>
<dbReference type="Pfam" id="PF07479">
    <property type="entry name" value="NAD_Gly3P_dh_C"/>
    <property type="match status" value="1"/>
</dbReference>
<dbReference type="Pfam" id="PF01210">
    <property type="entry name" value="NAD_Gly3P_dh_N"/>
    <property type="match status" value="1"/>
</dbReference>
<dbReference type="PIRSF" id="PIRSF000114">
    <property type="entry name" value="Glycerol-3-P_dh"/>
    <property type="match status" value="1"/>
</dbReference>
<dbReference type="PRINTS" id="PR00077">
    <property type="entry name" value="GPDHDRGNASE"/>
</dbReference>
<dbReference type="SUPFAM" id="SSF48179">
    <property type="entry name" value="6-phosphogluconate dehydrogenase C-terminal domain-like"/>
    <property type="match status" value="1"/>
</dbReference>
<dbReference type="SUPFAM" id="SSF51735">
    <property type="entry name" value="NAD(P)-binding Rossmann-fold domains"/>
    <property type="match status" value="1"/>
</dbReference>
<dbReference type="PROSITE" id="PS00957">
    <property type="entry name" value="NAD_G3PDH"/>
    <property type="match status" value="1"/>
</dbReference>
<name>GPDA_STAA1</name>